<name>PROB_CLAM3</name>
<proteinExistence type="inferred from homology"/>
<protein>
    <recommendedName>
        <fullName evidence="1">Glutamate 5-kinase</fullName>
        <ecNumber evidence="1">2.7.2.11</ecNumber>
    </recommendedName>
    <alternativeName>
        <fullName evidence="1">Gamma-glutamyl kinase</fullName>
        <shortName evidence="1">GK</shortName>
    </alternativeName>
</protein>
<feature type="chain" id="PRO_1000081050" description="Glutamate 5-kinase">
    <location>
        <begin position="1"/>
        <end position="259"/>
    </location>
</feature>
<feature type="binding site" evidence="1">
    <location>
        <position position="18"/>
    </location>
    <ligand>
        <name>ATP</name>
        <dbReference type="ChEBI" id="CHEBI:30616"/>
    </ligand>
</feature>
<feature type="binding site" evidence="1">
    <location>
        <position position="54"/>
    </location>
    <ligand>
        <name>substrate</name>
    </ligand>
</feature>
<feature type="binding site" evidence="1">
    <location>
        <position position="141"/>
    </location>
    <ligand>
        <name>substrate</name>
    </ligand>
</feature>
<feature type="binding site" evidence="1">
    <location>
        <position position="153"/>
    </location>
    <ligand>
        <name>substrate</name>
    </ligand>
</feature>
<feature type="binding site" evidence="1">
    <location>
        <begin position="173"/>
        <end position="174"/>
    </location>
    <ligand>
        <name>ATP</name>
        <dbReference type="ChEBI" id="CHEBI:30616"/>
    </ligand>
</feature>
<gene>
    <name evidence="1" type="primary">proB</name>
    <name type="ordered locus">CMM_1492</name>
</gene>
<evidence type="ECO:0000255" key="1">
    <source>
        <dbReference type="HAMAP-Rule" id="MF_00456"/>
    </source>
</evidence>
<keyword id="KW-0028">Amino-acid biosynthesis</keyword>
<keyword id="KW-0067">ATP-binding</keyword>
<keyword id="KW-0963">Cytoplasm</keyword>
<keyword id="KW-0418">Kinase</keyword>
<keyword id="KW-0547">Nucleotide-binding</keyword>
<keyword id="KW-0641">Proline biosynthesis</keyword>
<keyword id="KW-0808">Transferase</keyword>
<accession>A5CR33</accession>
<sequence>MGTASRAGIASARRIVVKVGSSSISGDNAGQIAPLVDAIASVHARGAEVVLVSSGAIATGMPFLRLDDRPADLATQQAAAAVGQSVLIFRYQESLDRYGIVAGQVLLTAGDLAAPDHRENAQRAMERLLGLRLLPIVNENDTVATHEIRFGDNDRLAALVARLVDADLLLLLSDVDALYTRPPEEPGARRIEHVGFGDELDGVEIGSTGTGVGTGGAVTKVAAARLAAEAGTGVLLTSTAQVHSALAGEHVGTWFAPRG</sequence>
<organism>
    <name type="scientific">Clavibacter michiganensis subsp. michiganensis (strain NCPPB 382)</name>
    <dbReference type="NCBI Taxonomy" id="443906"/>
    <lineage>
        <taxon>Bacteria</taxon>
        <taxon>Bacillati</taxon>
        <taxon>Actinomycetota</taxon>
        <taxon>Actinomycetes</taxon>
        <taxon>Micrococcales</taxon>
        <taxon>Microbacteriaceae</taxon>
        <taxon>Clavibacter</taxon>
    </lineage>
</organism>
<reference key="1">
    <citation type="journal article" date="2008" name="J. Bacteriol.">
        <title>The genome sequence of the tomato-pathogenic actinomycete Clavibacter michiganensis subsp. michiganensis NCPPB382 reveals a large island involved in pathogenicity.</title>
        <authorList>
            <person name="Gartemann K.-H."/>
            <person name="Abt B."/>
            <person name="Bekel T."/>
            <person name="Burger A."/>
            <person name="Engemann J."/>
            <person name="Fluegel M."/>
            <person name="Gaigalat L."/>
            <person name="Goesmann A."/>
            <person name="Graefen I."/>
            <person name="Kalinowski J."/>
            <person name="Kaup O."/>
            <person name="Kirchner O."/>
            <person name="Krause L."/>
            <person name="Linke B."/>
            <person name="McHardy A."/>
            <person name="Meyer F."/>
            <person name="Pohle S."/>
            <person name="Rueckert C."/>
            <person name="Schneiker S."/>
            <person name="Zellermann E.-M."/>
            <person name="Puehler A."/>
            <person name="Eichenlaub R."/>
            <person name="Kaiser O."/>
            <person name="Bartels D."/>
        </authorList>
    </citation>
    <scope>NUCLEOTIDE SEQUENCE [LARGE SCALE GENOMIC DNA]</scope>
    <source>
        <strain>NCPPB 382</strain>
    </source>
</reference>
<dbReference type="EC" id="2.7.2.11" evidence="1"/>
<dbReference type="EMBL" id="AM711867">
    <property type="protein sequence ID" value="CAN01538.1"/>
    <property type="molecule type" value="Genomic_DNA"/>
</dbReference>
<dbReference type="RefSeq" id="WP_012038178.1">
    <property type="nucleotide sequence ID" value="NC_009480.1"/>
</dbReference>
<dbReference type="SMR" id="A5CR33"/>
<dbReference type="KEGG" id="cmi:CMM_1492"/>
<dbReference type="eggNOG" id="COG0263">
    <property type="taxonomic scope" value="Bacteria"/>
</dbReference>
<dbReference type="HOGENOM" id="CLU_025400_0_1_11"/>
<dbReference type="OrthoDB" id="9804434at2"/>
<dbReference type="UniPathway" id="UPA00098">
    <property type="reaction ID" value="UER00359"/>
</dbReference>
<dbReference type="Proteomes" id="UP000001564">
    <property type="component" value="Chromosome"/>
</dbReference>
<dbReference type="GO" id="GO:0005829">
    <property type="term" value="C:cytosol"/>
    <property type="evidence" value="ECO:0007669"/>
    <property type="project" value="TreeGrafter"/>
</dbReference>
<dbReference type="GO" id="GO:0005524">
    <property type="term" value="F:ATP binding"/>
    <property type="evidence" value="ECO:0007669"/>
    <property type="project" value="UniProtKB-KW"/>
</dbReference>
<dbReference type="GO" id="GO:0004349">
    <property type="term" value="F:glutamate 5-kinase activity"/>
    <property type="evidence" value="ECO:0007669"/>
    <property type="project" value="UniProtKB-UniRule"/>
</dbReference>
<dbReference type="GO" id="GO:0055129">
    <property type="term" value="P:L-proline biosynthetic process"/>
    <property type="evidence" value="ECO:0007669"/>
    <property type="project" value="UniProtKB-UniRule"/>
</dbReference>
<dbReference type="FunFam" id="3.40.1160.10:FF:000006">
    <property type="entry name" value="Glutamate 5-kinase"/>
    <property type="match status" value="1"/>
</dbReference>
<dbReference type="Gene3D" id="3.40.1160.10">
    <property type="entry name" value="Acetylglutamate kinase-like"/>
    <property type="match status" value="1"/>
</dbReference>
<dbReference type="HAMAP" id="MF_00456">
    <property type="entry name" value="ProB"/>
    <property type="match status" value="1"/>
</dbReference>
<dbReference type="InterPro" id="IPR036393">
    <property type="entry name" value="AceGlu_kinase-like_sf"/>
</dbReference>
<dbReference type="InterPro" id="IPR001048">
    <property type="entry name" value="Asp/Glu/Uridylate_kinase"/>
</dbReference>
<dbReference type="InterPro" id="IPR001057">
    <property type="entry name" value="Glu/AcGlu_kinase"/>
</dbReference>
<dbReference type="InterPro" id="IPR011529">
    <property type="entry name" value="Glu_5kinase"/>
</dbReference>
<dbReference type="InterPro" id="IPR005715">
    <property type="entry name" value="Glu_5kinase/COase_Synthase"/>
</dbReference>
<dbReference type="NCBIfam" id="TIGR01027">
    <property type="entry name" value="proB"/>
    <property type="match status" value="1"/>
</dbReference>
<dbReference type="PANTHER" id="PTHR43654">
    <property type="entry name" value="GLUTAMATE 5-KINASE"/>
    <property type="match status" value="1"/>
</dbReference>
<dbReference type="PANTHER" id="PTHR43654:SF1">
    <property type="entry name" value="ISOPENTENYL PHOSPHATE KINASE"/>
    <property type="match status" value="1"/>
</dbReference>
<dbReference type="Pfam" id="PF00696">
    <property type="entry name" value="AA_kinase"/>
    <property type="match status" value="1"/>
</dbReference>
<dbReference type="PIRSF" id="PIRSF000729">
    <property type="entry name" value="GK"/>
    <property type="match status" value="1"/>
</dbReference>
<dbReference type="PRINTS" id="PR00474">
    <property type="entry name" value="GLU5KINASE"/>
</dbReference>
<dbReference type="SUPFAM" id="SSF53633">
    <property type="entry name" value="Carbamate kinase-like"/>
    <property type="match status" value="1"/>
</dbReference>
<comment type="function">
    <text evidence="1">Catalyzes the transfer of a phosphate group to glutamate to form L-glutamate 5-phosphate.</text>
</comment>
<comment type="catalytic activity">
    <reaction evidence="1">
        <text>L-glutamate + ATP = L-glutamyl 5-phosphate + ADP</text>
        <dbReference type="Rhea" id="RHEA:14877"/>
        <dbReference type="ChEBI" id="CHEBI:29985"/>
        <dbReference type="ChEBI" id="CHEBI:30616"/>
        <dbReference type="ChEBI" id="CHEBI:58274"/>
        <dbReference type="ChEBI" id="CHEBI:456216"/>
        <dbReference type="EC" id="2.7.2.11"/>
    </reaction>
</comment>
<comment type="pathway">
    <text evidence="1">Amino-acid biosynthesis; L-proline biosynthesis; L-glutamate 5-semialdehyde from L-glutamate: step 1/2.</text>
</comment>
<comment type="subcellular location">
    <subcellularLocation>
        <location evidence="1">Cytoplasm</location>
    </subcellularLocation>
</comment>
<comment type="similarity">
    <text evidence="1">Belongs to the glutamate 5-kinase family.</text>
</comment>